<name>YCIB_ECO57</name>
<sequence length="179" mass="20790">MKQFLDFLPLVVFFAFYKIYDIYAATAALIVATAIVLIYSWVRFRKVEKMALITFVLVVVFGGLTLFFHNDEFIKWKVTVIYALFAGALLVSQWVMKKPLIQRMLGKELTLPQPVWSKLNLAWAVFFILCGLANIYIAFWLPQNIWVNFKVFGLTALTLIFTLLSGIYIYRHMPQEDKS</sequence>
<organism>
    <name type="scientific">Escherichia coli O157:H7</name>
    <dbReference type="NCBI Taxonomy" id="83334"/>
    <lineage>
        <taxon>Bacteria</taxon>
        <taxon>Pseudomonadati</taxon>
        <taxon>Pseudomonadota</taxon>
        <taxon>Gammaproteobacteria</taxon>
        <taxon>Enterobacterales</taxon>
        <taxon>Enterobacteriaceae</taxon>
        <taxon>Escherichia</taxon>
    </lineage>
</organism>
<evidence type="ECO:0000255" key="1">
    <source>
        <dbReference type="HAMAP-Rule" id="MF_00189"/>
    </source>
</evidence>
<proteinExistence type="inferred from homology"/>
<protein>
    <recommendedName>
        <fullName evidence="1">Inner membrane-spanning protein YciB</fullName>
    </recommendedName>
</protein>
<keyword id="KW-0997">Cell inner membrane</keyword>
<keyword id="KW-1003">Cell membrane</keyword>
<keyword id="KW-0472">Membrane</keyword>
<keyword id="KW-1185">Reference proteome</keyword>
<keyword id="KW-0812">Transmembrane</keyword>
<keyword id="KW-1133">Transmembrane helix</keyword>
<reference key="1">
    <citation type="journal article" date="2001" name="Nature">
        <title>Genome sequence of enterohaemorrhagic Escherichia coli O157:H7.</title>
        <authorList>
            <person name="Perna N.T."/>
            <person name="Plunkett G. III"/>
            <person name="Burland V."/>
            <person name="Mau B."/>
            <person name="Glasner J.D."/>
            <person name="Rose D.J."/>
            <person name="Mayhew G.F."/>
            <person name="Evans P.S."/>
            <person name="Gregor J."/>
            <person name="Kirkpatrick H.A."/>
            <person name="Posfai G."/>
            <person name="Hackett J."/>
            <person name="Klink S."/>
            <person name="Boutin A."/>
            <person name="Shao Y."/>
            <person name="Miller L."/>
            <person name="Grotbeck E.J."/>
            <person name="Davis N.W."/>
            <person name="Lim A."/>
            <person name="Dimalanta E.T."/>
            <person name="Potamousis K."/>
            <person name="Apodaca J."/>
            <person name="Anantharaman T.S."/>
            <person name="Lin J."/>
            <person name="Yen G."/>
            <person name="Schwartz D.C."/>
            <person name="Welch R.A."/>
            <person name="Blattner F.R."/>
        </authorList>
    </citation>
    <scope>NUCLEOTIDE SEQUENCE [LARGE SCALE GENOMIC DNA]</scope>
    <source>
        <strain>O157:H7 / EDL933 / ATCC 700927 / EHEC</strain>
    </source>
</reference>
<reference key="2">
    <citation type="journal article" date="2001" name="DNA Res.">
        <title>Complete genome sequence of enterohemorrhagic Escherichia coli O157:H7 and genomic comparison with a laboratory strain K-12.</title>
        <authorList>
            <person name="Hayashi T."/>
            <person name="Makino K."/>
            <person name="Ohnishi M."/>
            <person name="Kurokawa K."/>
            <person name="Ishii K."/>
            <person name="Yokoyama K."/>
            <person name="Han C.-G."/>
            <person name="Ohtsubo E."/>
            <person name="Nakayama K."/>
            <person name="Murata T."/>
            <person name="Tanaka M."/>
            <person name="Tobe T."/>
            <person name="Iida T."/>
            <person name="Takami H."/>
            <person name="Honda T."/>
            <person name="Sasakawa C."/>
            <person name="Ogasawara N."/>
            <person name="Yasunaga T."/>
            <person name="Kuhara S."/>
            <person name="Shiba T."/>
            <person name="Hattori M."/>
            <person name="Shinagawa H."/>
        </authorList>
    </citation>
    <scope>NUCLEOTIDE SEQUENCE [LARGE SCALE GENOMIC DNA]</scope>
    <source>
        <strain>O157:H7 / Sakai / RIMD 0509952 / EHEC</strain>
    </source>
</reference>
<comment type="function">
    <text evidence="1">Plays a role in cell envelope biogenesis, maintenance of cell envelope integrity and membrane homeostasis.</text>
</comment>
<comment type="subcellular location">
    <subcellularLocation>
        <location evidence="1">Cell inner membrane</location>
        <topology evidence="1">Multi-pass membrane protein</topology>
    </subcellularLocation>
</comment>
<comment type="similarity">
    <text evidence="1">Belongs to the YciB family.</text>
</comment>
<feature type="chain" id="PRO_0000206532" description="Inner membrane-spanning protein YciB">
    <location>
        <begin position="1"/>
        <end position="179"/>
    </location>
</feature>
<feature type="transmembrane region" description="Helical" evidence="1">
    <location>
        <begin position="22"/>
        <end position="42"/>
    </location>
</feature>
<feature type="transmembrane region" description="Helical" evidence="1">
    <location>
        <begin position="50"/>
        <end position="70"/>
    </location>
</feature>
<feature type="transmembrane region" description="Helical" evidence="1">
    <location>
        <begin position="76"/>
        <end position="96"/>
    </location>
</feature>
<feature type="transmembrane region" description="Helical" evidence="1">
    <location>
        <begin position="121"/>
        <end position="141"/>
    </location>
</feature>
<feature type="transmembrane region" description="Helical" evidence="1">
    <location>
        <begin position="149"/>
        <end position="169"/>
    </location>
</feature>
<accession>P0A711</accession>
<accession>P21366</accession>
<accession>P94721</accession>
<accession>P94725</accession>
<accession>P94735</accession>
<accession>P94738</accession>
<dbReference type="EMBL" id="AE005174">
    <property type="protein sequence ID" value="AAG56109.1"/>
    <property type="molecule type" value="Genomic_DNA"/>
</dbReference>
<dbReference type="EMBL" id="BA000007">
    <property type="protein sequence ID" value="BAB35177.1"/>
    <property type="molecule type" value="Genomic_DNA"/>
</dbReference>
<dbReference type="PIR" id="A85706">
    <property type="entry name" value="A85706"/>
</dbReference>
<dbReference type="PIR" id="B90848">
    <property type="entry name" value="B90848"/>
</dbReference>
<dbReference type="RefSeq" id="WP_000808667.1">
    <property type="nucleotide sequence ID" value="NZ_VOAI01000031.1"/>
</dbReference>
<dbReference type="STRING" id="155864.Z2032"/>
<dbReference type="KEGG" id="ece:Z2032"/>
<dbReference type="KEGG" id="ecs:ECs_1754"/>
<dbReference type="PATRIC" id="fig|386585.9.peg.1856"/>
<dbReference type="eggNOG" id="COG2917">
    <property type="taxonomic scope" value="Bacteria"/>
</dbReference>
<dbReference type="HOGENOM" id="CLU_089554_2_0_6"/>
<dbReference type="OMA" id="VWRTQST"/>
<dbReference type="Proteomes" id="UP000000558">
    <property type="component" value="Chromosome"/>
</dbReference>
<dbReference type="Proteomes" id="UP000002519">
    <property type="component" value="Chromosome"/>
</dbReference>
<dbReference type="GO" id="GO:0005886">
    <property type="term" value="C:plasma membrane"/>
    <property type="evidence" value="ECO:0007669"/>
    <property type="project" value="UniProtKB-SubCell"/>
</dbReference>
<dbReference type="HAMAP" id="MF_00189">
    <property type="entry name" value="YciB"/>
    <property type="match status" value="1"/>
</dbReference>
<dbReference type="InterPro" id="IPR006008">
    <property type="entry name" value="YciB"/>
</dbReference>
<dbReference type="NCBIfam" id="TIGR00997">
    <property type="entry name" value="ispZ"/>
    <property type="match status" value="1"/>
</dbReference>
<dbReference type="NCBIfam" id="NF001324">
    <property type="entry name" value="PRK00259.1-2"/>
    <property type="match status" value="1"/>
</dbReference>
<dbReference type="NCBIfam" id="NF001325">
    <property type="entry name" value="PRK00259.1-3"/>
    <property type="match status" value="1"/>
</dbReference>
<dbReference type="NCBIfam" id="NF001326">
    <property type="entry name" value="PRK00259.1-4"/>
    <property type="match status" value="1"/>
</dbReference>
<dbReference type="PANTHER" id="PTHR36917:SF1">
    <property type="entry name" value="INNER MEMBRANE-SPANNING PROTEIN YCIB"/>
    <property type="match status" value="1"/>
</dbReference>
<dbReference type="PANTHER" id="PTHR36917">
    <property type="entry name" value="INTRACELLULAR SEPTATION PROTEIN A-RELATED"/>
    <property type="match status" value="1"/>
</dbReference>
<dbReference type="Pfam" id="PF04279">
    <property type="entry name" value="IspA"/>
    <property type="match status" value="1"/>
</dbReference>
<gene>
    <name evidence="1" type="primary">yciB</name>
    <name type="ordered locus">Z2032</name>
    <name type="ordered locus">ECs1754</name>
</gene>